<accession>B7MBA4</accession>
<gene>
    <name evidence="1" type="primary">speE</name>
    <name type="ordered locus">ECS88_0130</name>
</gene>
<proteinExistence type="inferred from homology"/>
<sequence length="288" mass="32334">MAEKKQWHETLHDQFGQYFAVDNVLYHEKTDHQDLIIFENAAFGRVMALDGVVQTTERDEFIYHEMMTHVPLLAHGHAKHVLIIGGGDGAMLREVTRHKNVESITMVEIDAGVVSFCRQYLPNHNAGSYDDPRFKLVIDDGVNFVNQTNQTFDVIISDCTDPIGPGESLFTSAFYEGCKRCLNPGGIFVAQNGVCFLQQEEAIDSHRKLSHYFSDVGFYQAAIPTYYGGIMTFAWATDNDALRHLSTEIIQARFLASGLKCRYYNPAVHTAAFALPQYLQDALASQPS</sequence>
<dbReference type="EC" id="2.5.1.16" evidence="1"/>
<dbReference type="EMBL" id="CU928161">
    <property type="protein sequence ID" value="CAR01495.1"/>
    <property type="molecule type" value="Genomic_DNA"/>
</dbReference>
<dbReference type="RefSeq" id="WP_000818405.1">
    <property type="nucleotide sequence ID" value="NC_011742.1"/>
</dbReference>
<dbReference type="SMR" id="B7MBA4"/>
<dbReference type="KEGG" id="ecz:ECS88_0130"/>
<dbReference type="HOGENOM" id="CLU_048199_0_0_6"/>
<dbReference type="UniPathway" id="UPA00248">
    <property type="reaction ID" value="UER00314"/>
</dbReference>
<dbReference type="Proteomes" id="UP000000747">
    <property type="component" value="Chromosome"/>
</dbReference>
<dbReference type="GO" id="GO:0005829">
    <property type="term" value="C:cytosol"/>
    <property type="evidence" value="ECO:0007669"/>
    <property type="project" value="TreeGrafter"/>
</dbReference>
<dbReference type="GO" id="GO:0004766">
    <property type="term" value="F:spermidine synthase activity"/>
    <property type="evidence" value="ECO:0007669"/>
    <property type="project" value="UniProtKB-UniRule"/>
</dbReference>
<dbReference type="GO" id="GO:0008295">
    <property type="term" value="P:spermidine biosynthetic process"/>
    <property type="evidence" value="ECO:0007669"/>
    <property type="project" value="UniProtKB-UniRule"/>
</dbReference>
<dbReference type="CDD" id="cd02440">
    <property type="entry name" value="AdoMet_MTases"/>
    <property type="match status" value="1"/>
</dbReference>
<dbReference type="FunFam" id="2.30.140.10:FF:000002">
    <property type="entry name" value="Polyamine aminopropyltransferase"/>
    <property type="match status" value="1"/>
</dbReference>
<dbReference type="FunFam" id="3.40.50.150:FF:000026">
    <property type="entry name" value="Polyamine aminopropyltransferase"/>
    <property type="match status" value="1"/>
</dbReference>
<dbReference type="Gene3D" id="2.30.140.10">
    <property type="entry name" value="Spermidine synthase, tetramerisation domain"/>
    <property type="match status" value="1"/>
</dbReference>
<dbReference type="Gene3D" id="3.40.50.150">
    <property type="entry name" value="Vaccinia Virus protein VP39"/>
    <property type="match status" value="1"/>
</dbReference>
<dbReference type="HAMAP" id="MF_00198">
    <property type="entry name" value="Spermidine_synth"/>
    <property type="match status" value="1"/>
</dbReference>
<dbReference type="InterPro" id="IPR030374">
    <property type="entry name" value="PABS"/>
</dbReference>
<dbReference type="InterPro" id="IPR030373">
    <property type="entry name" value="PABS_CS"/>
</dbReference>
<dbReference type="InterPro" id="IPR029063">
    <property type="entry name" value="SAM-dependent_MTases_sf"/>
</dbReference>
<dbReference type="InterPro" id="IPR001045">
    <property type="entry name" value="Spermi_synthase"/>
</dbReference>
<dbReference type="InterPro" id="IPR035246">
    <property type="entry name" value="Spermidine_synt_N"/>
</dbReference>
<dbReference type="InterPro" id="IPR037163">
    <property type="entry name" value="Spermidine_synt_N_sf"/>
</dbReference>
<dbReference type="NCBIfam" id="NF037959">
    <property type="entry name" value="MFS_SpdSyn"/>
    <property type="match status" value="1"/>
</dbReference>
<dbReference type="NCBIfam" id="NF002010">
    <property type="entry name" value="PRK00811.1"/>
    <property type="match status" value="1"/>
</dbReference>
<dbReference type="NCBIfam" id="TIGR00417">
    <property type="entry name" value="speE"/>
    <property type="match status" value="1"/>
</dbReference>
<dbReference type="PANTHER" id="PTHR11558:SF11">
    <property type="entry name" value="SPERMIDINE SYNTHASE"/>
    <property type="match status" value="1"/>
</dbReference>
<dbReference type="PANTHER" id="PTHR11558">
    <property type="entry name" value="SPERMIDINE/SPERMINE SYNTHASE"/>
    <property type="match status" value="1"/>
</dbReference>
<dbReference type="Pfam" id="PF17284">
    <property type="entry name" value="Spermine_synt_N"/>
    <property type="match status" value="1"/>
</dbReference>
<dbReference type="Pfam" id="PF01564">
    <property type="entry name" value="Spermine_synth"/>
    <property type="match status" value="1"/>
</dbReference>
<dbReference type="SUPFAM" id="SSF53335">
    <property type="entry name" value="S-adenosyl-L-methionine-dependent methyltransferases"/>
    <property type="match status" value="1"/>
</dbReference>
<dbReference type="PROSITE" id="PS01330">
    <property type="entry name" value="PABS_1"/>
    <property type="match status" value="1"/>
</dbReference>
<dbReference type="PROSITE" id="PS51006">
    <property type="entry name" value="PABS_2"/>
    <property type="match status" value="1"/>
</dbReference>
<evidence type="ECO:0000255" key="1">
    <source>
        <dbReference type="HAMAP-Rule" id="MF_00198"/>
    </source>
</evidence>
<comment type="function">
    <text evidence="1">Catalyzes the irreversible transfer of a propylamine group from the amino donor S-adenosylmethioninamine (decarboxy-AdoMet) to putrescine (1,4-diaminobutane) to yield spermidine.</text>
</comment>
<comment type="catalytic activity">
    <reaction evidence="1">
        <text>S-adenosyl 3-(methylsulfanyl)propylamine + putrescine = S-methyl-5'-thioadenosine + spermidine + H(+)</text>
        <dbReference type="Rhea" id="RHEA:12721"/>
        <dbReference type="ChEBI" id="CHEBI:15378"/>
        <dbReference type="ChEBI" id="CHEBI:17509"/>
        <dbReference type="ChEBI" id="CHEBI:57443"/>
        <dbReference type="ChEBI" id="CHEBI:57834"/>
        <dbReference type="ChEBI" id="CHEBI:326268"/>
        <dbReference type="EC" id="2.5.1.16"/>
    </reaction>
</comment>
<comment type="pathway">
    <text evidence="1">Amine and polyamine biosynthesis; spermidine biosynthesis; spermidine from putrescine: step 1/1.</text>
</comment>
<comment type="subunit">
    <text evidence="1">Homodimer or homotetramer.</text>
</comment>
<comment type="subcellular location">
    <subcellularLocation>
        <location evidence="1">Cytoplasm</location>
    </subcellularLocation>
</comment>
<comment type="similarity">
    <text evidence="1">Belongs to the spermidine/spermine synthase family.</text>
</comment>
<keyword id="KW-0963">Cytoplasm</keyword>
<keyword id="KW-0620">Polyamine biosynthesis</keyword>
<keyword id="KW-1185">Reference proteome</keyword>
<keyword id="KW-0745">Spermidine biosynthesis</keyword>
<keyword id="KW-0808">Transferase</keyword>
<feature type="chain" id="PRO_1000197471" description="Polyamine aminopropyltransferase">
    <location>
        <begin position="1"/>
        <end position="288"/>
    </location>
</feature>
<feature type="domain" description="PABS" evidence="1">
    <location>
        <begin position="9"/>
        <end position="238"/>
    </location>
</feature>
<feature type="active site" description="Proton acceptor" evidence="1">
    <location>
        <position position="158"/>
    </location>
</feature>
<feature type="binding site" evidence="1">
    <location>
        <position position="33"/>
    </location>
    <ligand>
        <name>S-methyl-5'-thioadenosine</name>
        <dbReference type="ChEBI" id="CHEBI:17509"/>
    </ligand>
</feature>
<feature type="binding site" evidence="1">
    <location>
        <position position="64"/>
    </location>
    <ligand>
        <name>spermidine</name>
        <dbReference type="ChEBI" id="CHEBI:57834"/>
    </ligand>
</feature>
<feature type="binding site" evidence="1">
    <location>
        <position position="88"/>
    </location>
    <ligand>
        <name>spermidine</name>
        <dbReference type="ChEBI" id="CHEBI:57834"/>
    </ligand>
</feature>
<feature type="binding site" evidence="1">
    <location>
        <position position="108"/>
    </location>
    <ligand>
        <name>S-methyl-5'-thioadenosine</name>
        <dbReference type="ChEBI" id="CHEBI:17509"/>
    </ligand>
</feature>
<feature type="binding site" evidence="1">
    <location>
        <begin position="140"/>
        <end position="141"/>
    </location>
    <ligand>
        <name>S-methyl-5'-thioadenosine</name>
        <dbReference type="ChEBI" id="CHEBI:17509"/>
    </ligand>
</feature>
<feature type="binding site" evidence="1">
    <location>
        <begin position="158"/>
        <end position="161"/>
    </location>
    <ligand>
        <name>spermidine</name>
        <dbReference type="ChEBI" id="CHEBI:57834"/>
    </ligand>
</feature>
<feature type="binding site" evidence="1">
    <location>
        <position position="165"/>
    </location>
    <ligand>
        <name>S-methyl-5'-thioadenosine</name>
        <dbReference type="ChEBI" id="CHEBI:17509"/>
    </ligand>
</feature>
<protein>
    <recommendedName>
        <fullName evidence="1">Polyamine aminopropyltransferase</fullName>
    </recommendedName>
    <alternativeName>
        <fullName evidence="1">Putrescine aminopropyltransferase</fullName>
        <shortName evidence="1">PAPT</shortName>
    </alternativeName>
    <alternativeName>
        <fullName evidence="1">Spermidine synthase</fullName>
        <shortName evidence="1">SPDS</shortName>
        <shortName evidence="1">SPDSY</shortName>
        <ecNumber evidence="1">2.5.1.16</ecNumber>
    </alternativeName>
</protein>
<name>SPEE_ECO45</name>
<organism>
    <name type="scientific">Escherichia coli O45:K1 (strain S88 / ExPEC)</name>
    <dbReference type="NCBI Taxonomy" id="585035"/>
    <lineage>
        <taxon>Bacteria</taxon>
        <taxon>Pseudomonadati</taxon>
        <taxon>Pseudomonadota</taxon>
        <taxon>Gammaproteobacteria</taxon>
        <taxon>Enterobacterales</taxon>
        <taxon>Enterobacteriaceae</taxon>
        <taxon>Escherichia</taxon>
    </lineage>
</organism>
<reference key="1">
    <citation type="journal article" date="2009" name="PLoS Genet.">
        <title>Organised genome dynamics in the Escherichia coli species results in highly diverse adaptive paths.</title>
        <authorList>
            <person name="Touchon M."/>
            <person name="Hoede C."/>
            <person name="Tenaillon O."/>
            <person name="Barbe V."/>
            <person name="Baeriswyl S."/>
            <person name="Bidet P."/>
            <person name="Bingen E."/>
            <person name="Bonacorsi S."/>
            <person name="Bouchier C."/>
            <person name="Bouvet O."/>
            <person name="Calteau A."/>
            <person name="Chiapello H."/>
            <person name="Clermont O."/>
            <person name="Cruveiller S."/>
            <person name="Danchin A."/>
            <person name="Diard M."/>
            <person name="Dossat C."/>
            <person name="Karoui M.E."/>
            <person name="Frapy E."/>
            <person name="Garry L."/>
            <person name="Ghigo J.M."/>
            <person name="Gilles A.M."/>
            <person name="Johnson J."/>
            <person name="Le Bouguenec C."/>
            <person name="Lescat M."/>
            <person name="Mangenot S."/>
            <person name="Martinez-Jehanne V."/>
            <person name="Matic I."/>
            <person name="Nassif X."/>
            <person name="Oztas S."/>
            <person name="Petit M.A."/>
            <person name="Pichon C."/>
            <person name="Rouy Z."/>
            <person name="Ruf C.S."/>
            <person name="Schneider D."/>
            <person name="Tourret J."/>
            <person name="Vacherie B."/>
            <person name="Vallenet D."/>
            <person name="Medigue C."/>
            <person name="Rocha E.P.C."/>
            <person name="Denamur E."/>
        </authorList>
    </citation>
    <scope>NUCLEOTIDE SEQUENCE [LARGE SCALE GENOMIC DNA]</scope>
    <source>
        <strain>S88 / ExPEC</strain>
    </source>
</reference>